<organism evidence="4">
    <name type="scientific">Caenorhabditis briggsae</name>
    <dbReference type="NCBI Taxonomy" id="6238"/>
    <lineage>
        <taxon>Eukaryota</taxon>
        <taxon>Metazoa</taxon>
        <taxon>Ecdysozoa</taxon>
        <taxon>Nematoda</taxon>
        <taxon>Chromadorea</taxon>
        <taxon>Rhabditida</taxon>
        <taxon>Rhabditina</taxon>
        <taxon>Rhabditomorpha</taxon>
        <taxon>Rhabditoidea</taxon>
        <taxon>Rhabditidae</taxon>
        <taxon>Peloderinae</taxon>
        <taxon>Caenorhabditis</taxon>
    </lineage>
</organism>
<dbReference type="EC" id="2.7.7.13" evidence="1"/>
<dbReference type="EMBL" id="HE600986">
    <property type="protein sequence ID" value="CAP26139.2"/>
    <property type="molecule type" value="Genomic_DNA"/>
</dbReference>
<dbReference type="SMR" id="Q61S97"/>
<dbReference type="FunCoup" id="Q61S97">
    <property type="interactions" value="2230"/>
</dbReference>
<dbReference type="STRING" id="6238.Q61S97"/>
<dbReference type="EnsemblMetazoa" id="CBG06266.1">
    <property type="protein sequence ID" value="CBG06266.1"/>
    <property type="gene ID" value="WBGene00028569"/>
</dbReference>
<dbReference type="WormBase" id="CBG06266">
    <property type="protein sequence ID" value="CBP34494"/>
    <property type="gene ID" value="WBGene00028569"/>
</dbReference>
<dbReference type="eggNOG" id="KOG1322">
    <property type="taxonomic scope" value="Eukaryota"/>
</dbReference>
<dbReference type="HOGENOM" id="CLU_029499_0_0_1"/>
<dbReference type="InParanoid" id="Q61S97"/>
<dbReference type="OMA" id="GPNCWIC"/>
<dbReference type="OrthoDB" id="1733332at2759"/>
<dbReference type="UniPathway" id="UPA00126">
    <property type="reaction ID" value="UER00930"/>
</dbReference>
<dbReference type="Proteomes" id="UP000008549">
    <property type="component" value="Unassembled WGS sequence"/>
</dbReference>
<dbReference type="GO" id="GO:0005737">
    <property type="term" value="C:cytoplasm"/>
    <property type="evidence" value="ECO:0000318"/>
    <property type="project" value="GO_Central"/>
</dbReference>
<dbReference type="GO" id="GO:0005525">
    <property type="term" value="F:GTP binding"/>
    <property type="evidence" value="ECO:0007669"/>
    <property type="project" value="UniProtKB-KW"/>
</dbReference>
<dbReference type="GO" id="GO:0004475">
    <property type="term" value="F:mannose-1-phosphate guanylyltransferase (GTP) activity"/>
    <property type="evidence" value="ECO:0000318"/>
    <property type="project" value="GO_Central"/>
</dbReference>
<dbReference type="GO" id="GO:0046872">
    <property type="term" value="F:metal ion binding"/>
    <property type="evidence" value="ECO:0007669"/>
    <property type="project" value="UniProtKB-KW"/>
</dbReference>
<dbReference type="GO" id="GO:0009298">
    <property type="term" value="P:GDP-mannose biosynthetic process"/>
    <property type="evidence" value="ECO:0000318"/>
    <property type="project" value="GO_Central"/>
</dbReference>
<dbReference type="GO" id="GO:0006486">
    <property type="term" value="P:protein glycosylation"/>
    <property type="evidence" value="ECO:0000318"/>
    <property type="project" value="GO_Central"/>
</dbReference>
<dbReference type="CDD" id="cd06425">
    <property type="entry name" value="M1P_guanylylT_B_like_N"/>
    <property type="match status" value="1"/>
</dbReference>
<dbReference type="FunFam" id="3.90.550.10:FF:000013">
    <property type="entry name" value="mannose-1-phosphate guanyltransferase beta"/>
    <property type="match status" value="1"/>
</dbReference>
<dbReference type="Gene3D" id="2.160.10.10">
    <property type="entry name" value="Hexapeptide repeat proteins"/>
    <property type="match status" value="1"/>
</dbReference>
<dbReference type="Gene3D" id="3.90.550.10">
    <property type="entry name" value="Spore Coat Polysaccharide Biosynthesis Protein SpsA, Chain A"/>
    <property type="match status" value="1"/>
</dbReference>
<dbReference type="InterPro" id="IPR056729">
    <property type="entry name" value="GMPPB_C"/>
</dbReference>
<dbReference type="InterPro" id="IPR045233">
    <property type="entry name" value="GMPPB_N"/>
</dbReference>
<dbReference type="InterPro" id="IPR018357">
    <property type="entry name" value="Hexapep_transf_CS"/>
</dbReference>
<dbReference type="InterPro" id="IPR050486">
    <property type="entry name" value="Mannose-1P_guanyltransferase"/>
</dbReference>
<dbReference type="InterPro" id="IPR005835">
    <property type="entry name" value="NTP_transferase_dom"/>
</dbReference>
<dbReference type="InterPro" id="IPR029044">
    <property type="entry name" value="Nucleotide-diphossugar_trans"/>
</dbReference>
<dbReference type="PANTHER" id="PTHR22572">
    <property type="entry name" value="SUGAR-1-PHOSPHATE GUANYL TRANSFERASE"/>
    <property type="match status" value="1"/>
</dbReference>
<dbReference type="Pfam" id="PF25087">
    <property type="entry name" value="GMPPB_C"/>
    <property type="match status" value="1"/>
</dbReference>
<dbReference type="Pfam" id="PF00483">
    <property type="entry name" value="NTP_transferase"/>
    <property type="match status" value="1"/>
</dbReference>
<dbReference type="SUPFAM" id="SSF53448">
    <property type="entry name" value="Nucleotide-diphospho-sugar transferases"/>
    <property type="match status" value="1"/>
</dbReference>
<dbReference type="PROSITE" id="PS00101">
    <property type="entry name" value="HEXAPEP_TRANSFERASES"/>
    <property type="match status" value="1"/>
</dbReference>
<proteinExistence type="inferred from homology"/>
<name>GMPPB_CAEBR</name>
<gene>
    <name type="ORF">CBG06266</name>
</gene>
<feature type="chain" id="PRO_0000307169" description="Mannose-1-phosphate guanylyltransferase catalytic subunit beta">
    <location>
        <begin position="1"/>
        <end position="364"/>
    </location>
</feature>
<feature type="region of interest" description="Substrate-binding domain" evidence="2">
    <location>
        <begin position="2"/>
        <end position="220"/>
    </location>
</feature>
<feature type="region of interest" description="Hexapeptide repeat domain" evidence="2">
    <location>
        <begin position="243"/>
        <end position="364"/>
    </location>
</feature>
<feature type="active site" evidence="2">
    <location>
        <position position="160"/>
    </location>
</feature>
<feature type="binding site" evidence="2">
    <location>
        <position position="109"/>
    </location>
    <ligand>
        <name>GDP-alpha-D-mannose</name>
        <dbReference type="ChEBI" id="CHEBI:57527"/>
    </ligand>
</feature>
<feature type="binding site" evidence="2">
    <location>
        <position position="109"/>
    </location>
    <ligand>
        <name>Mg(2+)</name>
        <dbReference type="ChEBI" id="CHEBI:18420"/>
    </ligand>
</feature>
<feature type="binding site" evidence="2">
    <location>
        <position position="216"/>
    </location>
    <ligand>
        <name>GDP-alpha-D-mannose</name>
        <dbReference type="ChEBI" id="CHEBI:57527"/>
    </ligand>
</feature>
<feature type="binding site" evidence="2">
    <location>
        <position position="216"/>
    </location>
    <ligand>
        <name>Mg(2+)</name>
        <dbReference type="ChEBI" id="CHEBI:18420"/>
    </ligand>
</feature>
<sequence>MKALILVGGYGTRLRPLTLTQPKPLVEFANKPMMLHQMEALAAVGVDTVVLAVSYRAEQLEAEMTVHADRLGVKLIFSLEEEPLGTAGPLALARKHLEDDDPFFVLNSDVICDFPFKQMVEFHKQHGKEGTIAVTKVEEPSKYGVVVFKEDGKIDDFVEKPQEYVGNKINAGLYIFNSAILDRIPLKPTSIEKEIFPQMATSGNLYAYVLPGFWMDVGQPKDFLKGMSLFLNHVQTTRTGALATGSNIHGTATIRGSVLVDPSATVGENCVIGPDVVIGPRVQIEGGVRIQHSTILSDSTVGNYSWVSGSIIGRECHIGSWVRMENVCVLGDDVVVKDEVYLNEASVLPHKVIAVNVPSKDIIM</sequence>
<keyword id="KW-0342">GTP-binding</keyword>
<keyword id="KW-0460">Magnesium</keyword>
<keyword id="KW-0479">Metal-binding</keyword>
<keyword id="KW-0547">Nucleotide-binding</keyword>
<keyword id="KW-0548">Nucleotidyltransferase</keyword>
<keyword id="KW-1185">Reference proteome</keyword>
<keyword id="KW-0808">Transferase</keyword>
<evidence type="ECO:0000250" key="1">
    <source>
        <dbReference type="UniProtKB" id="P0C5I2"/>
    </source>
</evidence>
<evidence type="ECO:0000250" key="2">
    <source>
        <dbReference type="UniProtKB" id="Q9Y5P6"/>
    </source>
</evidence>
<evidence type="ECO:0000305" key="3"/>
<evidence type="ECO:0000312" key="4">
    <source>
        <dbReference type="Proteomes" id="UP000008549"/>
    </source>
</evidence>
<protein>
    <recommendedName>
        <fullName evidence="3">Mannose-1-phosphate guanylyltransferase catalytic subunit beta</fullName>
        <ecNumber evidence="1">2.7.7.13</ecNumber>
    </recommendedName>
    <alternativeName>
        <fullName>GDP-mannose pyrophosphorylase B</fullName>
        <shortName evidence="3">GMPPB</shortName>
    </alternativeName>
    <alternativeName>
        <fullName>GTP-mannose-1-phosphate guanylyltransferase beta</fullName>
    </alternativeName>
</protein>
<accession>Q61S97</accession>
<accession>A8X0H9</accession>
<reference key="1">
    <citation type="journal article" date="2003" name="PLoS Biol.">
        <title>The genome sequence of Caenorhabditis briggsae: a platform for comparative genomics.</title>
        <authorList>
            <person name="Stein L.D."/>
            <person name="Bao Z."/>
            <person name="Blasiar D."/>
            <person name="Blumenthal T."/>
            <person name="Brent M.R."/>
            <person name="Chen N."/>
            <person name="Chinwalla A."/>
            <person name="Clarke L."/>
            <person name="Clee C."/>
            <person name="Coghlan A."/>
            <person name="Coulson A."/>
            <person name="D'Eustachio P."/>
            <person name="Fitch D.H.A."/>
            <person name="Fulton L.A."/>
            <person name="Fulton R.E."/>
            <person name="Griffiths-Jones S."/>
            <person name="Harris T.W."/>
            <person name="Hillier L.W."/>
            <person name="Kamath R."/>
            <person name="Kuwabara P.E."/>
            <person name="Mardis E.R."/>
            <person name="Marra M.A."/>
            <person name="Miner T.L."/>
            <person name="Minx P."/>
            <person name="Mullikin J.C."/>
            <person name="Plumb R.W."/>
            <person name="Rogers J."/>
            <person name="Schein J.E."/>
            <person name="Sohrmann M."/>
            <person name="Spieth J."/>
            <person name="Stajich J.E."/>
            <person name="Wei C."/>
            <person name="Willey D."/>
            <person name="Wilson R.K."/>
            <person name="Durbin R.M."/>
            <person name="Waterston R.H."/>
        </authorList>
    </citation>
    <scope>NUCLEOTIDE SEQUENCE [LARGE SCALE GENOMIC DNA]</scope>
    <source>
        <strain>AF16</strain>
    </source>
</reference>
<comment type="function">
    <text evidence="1 2">Catalytic subunit of the GMPPA-GMPPB mannose-1-phosphate guanylyltransferase complex (By similarity). Catalyzes the formation of GDP-mannose, an essential precursor of glycan moieties of glycoproteins and glycolipids (By similarity). Can catalyze the reverse reaction in vitro (By similarity). Together with GMPPA regulates GDP-alpha-D-mannose levels (By similarity).</text>
</comment>
<comment type="catalytic activity">
    <reaction evidence="1">
        <text>alpha-D-mannose 1-phosphate + GTP + H(+) = GDP-alpha-D-mannose + diphosphate</text>
        <dbReference type="Rhea" id="RHEA:15229"/>
        <dbReference type="ChEBI" id="CHEBI:15378"/>
        <dbReference type="ChEBI" id="CHEBI:33019"/>
        <dbReference type="ChEBI" id="CHEBI:37565"/>
        <dbReference type="ChEBI" id="CHEBI:57527"/>
        <dbReference type="ChEBI" id="CHEBI:58409"/>
        <dbReference type="EC" id="2.7.7.13"/>
    </reaction>
    <physiologicalReaction direction="left-to-right" evidence="2">
        <dbReference type="Rhea" id="RHEA:15230"/>
    </physiologicalReaction>
    <physiologicalReaction direction="right-to-left" evidence="2">
        <dbReference type="Rhea" id="RHEA:15231"/>
    </physiologicalReaction>
</comment>
<comment type="cofactor">
    <cofactor evidence="2">
        <name>Mg(2+)</name>
        <dbReference type="ChEBI" id="CHEBI:18420"/>
    </cofactor>
    <text evidence="2">Coordinates binding with substrate and required for enzymatic activity.</text>
</comment>
<comment type="activity regulation">
    <text evidence="2">Enzyme activity is reduced by incorporation into the GMPPA-GMPPB mannose-1-phosphate guanylyltransferase complex. Allosterically inhibited, when part of the GMPPA-GMPPB complex, by GDP-alpha-D-mannose binding to GMPPA.</text>
</comment>
<comment type="pathway">
    <text evidence="1">Nucleotide-sugar biosynthesis; GDP-alpha-D-mannose biosynthesis; GDP-alpha-D-mannose from alpha-D-mannose 1-phosphate (GTP route): step 1/1.</text>
</comment>
<comment type="subunit">
    <text evidence="2">Component of the GMPPA-GMPPB mannose-1-phosphate guanylyltransferase complex composed of 4 GMPPA subunits and 8 tag-335/GMPPB subunits; the complex is organized into three layers, a central layer made up of 2 GMPPA dimers sandwiched between two layers each made up of 2 tag-335/GMPPB dimers. Catalytic activity of tag-335/GMPPB is reduced when part of the complex and binding of GDP-alpha-D-Mannose by GMPPA induces allosteric feedback inhibition of tag-335/GMPPB.</text>
</comment>
<comment type="domain">
    <text evidence="2">The N-terminal substrate-binding domain adopts a Rossman-like fold and has a binding pocket for GTP or GDP-alpha-D-mannose (By similarity). Substrate binding is coordinated by an Mg(2+) ion (By similarity).</text>
</comment>
<comment type="domain">
    <text evidence="2">The C-terminal domain consists of a series of tandem hexapeptide repeats that adopt a beta-helix conformation (By similarity). The beta-helix forms several protein interaction surfaces involved in assembly of the GMPPA-GMPPB mannose-1-phosphate guanylyltransferase complex (By similarity).</text>
</comment>
<comment type="similarity">
    <text evidence="3">Belongs to the transferase hexapeptide repeat family.</text>
</comment>